<dbReference type="EC" id="1.17.1.8" evidence="1"/>
<dbReference type="EMBL" id="CP000511">
    <property type="protein sequence ID" value="ABM13188.1"/>
    <property type="molecule type" value="Genomic_DNA"/>
</dbReference>
<dbReference type="RefSeq" id="WP_011779600.1">
    <property type="nucleotide sequence ID" value="NZ_JACKSD010000054.1"/>
</dbReference>
<dbReference type="SMR" id="A1T7N8"/>
<dbReference type="STRING" id="350058.Mvan_2374"/>
<dbReference type="KEGG" id="mva:Mvan_2374"/>
<dbReference type="eggNOG" id="COG0289">
    <property type="taxonomic scope" value="Bacteria"/>
</dbReference>
<dbReference type="HOGENOM" id="CLU_047479_0_1_11"/>
<dbReference type="UniPathway" id="UPA00034">
    <property type="reaction ID" value="UER00018"/>
</dbReference>
<dbReference type="Proteomes" id="UP000009159">
    <property type="component" value="Chromosome"/>
</dbReference>
<dbReference type="GO" id="GO:0005829">
    <property type="term" value="C:cytosol"/>
    <property type="evidence" value="ECO:0007669"/>
    <property type="project" value="TreeGrafter"/>
</dbReference>
<dbReference type="GO" id="GO:0008839">
    <property type="term" value="F:4-hydroxy-tetrahydrodipicolinate reductase"/>
    <property type="evidence" value="ECO:0007669"/>
    <property type="project" value="UniProtKB-EC"/>
</dbReference>
<dbReference type="GO" id="GO:0051287">
    <property type="term" value="F:NAD binding"/>
    <property type="evidence" value="ECO:0007669"/>
    <property type="project" value="UniProtKB-UniRule"/>
</dbReference>
<dbReference type="GO" id="GO:0050661">
    <property type="term" value="F:NADP binding"/>
    <property type="evidence" value="ECO:0007669"/>
    <property type="project" value="UniProtKB-UniRule"/>
</dbReference>
<dbReference type="GO" id="GO:0016726">
    <property type="term" value="F:oxidoreductase activity, acting on CH or CH2 groups, NAD or NADP as acceptor"/>
    <property type="evidence" value="ECO:0007669"/>
    <property type="project" value="UniProtKB-UniRule"/>
</dbReference>
<dbReference type="GO" id="GO:0019877">
    <property type="term" value="P:diaminopimelate biosynthetic process"/>
    <property type="evidence" value="ECO:0007669"/>
    <property type="project" value="UniProtKB-UniRule"/>
</dbReference>
<dbReference type="GO" id="GO:0009089">
    <property type="term" value="P:lysine biosynthetic process via diaminopimelate"/>
    <property type="evidence" value="ECO:0007669"/>
    <property type="project" value="UniProtKB-UniRule"/>
</dbReference>
<dbReference type="CDD" id="cd02274">
    <property type="entry name" value="DHDPR_N"/>
    <property type="match status" value="1"/>
</dbReference>
<dbReference type="FunFam" id="3.30.360.10:FF:000009">
    <property type="entry name" value="4-hydroxy-tetrahydrodipicolinate reductase"/>
    <property type="match status" value="1"/>
</dbReference>
<dbReference type="Gene3D" id="3.30.360.10">
    <property type="entry name" value="Dihydrodipicolinate Reductase, domain 2"/>
    <property type="match status" value="1"/>
</dbReference>
<dbReference type="Gene3D" id="3.40.50.720">
    <property type="entry name" value="NAD(P)-binding Rossmann-like Domain"/>
    <property type="match status" value="1"/>
</dbReference>
<dbReference type="HAMAP" id="MF_00102">
    <property type="entry name" value="DapB"/>
    <property type="match status" value="1"/>
</dbReference>
<dbReference type="InterPro" id="IPR022663">
    <property type="entry name" value="DapB_C"/>
</dbReference>
<dbReference type="InterPro" id="IPR000846">
    <property type="entry name" value="DapB_N"/>
</dbReference>
<dbReference type="InterPro" id="IPR022664">
    <property type="entry name" value="DapB_N_CS"/>
</dbReference>
<dbReference type="InterPro" id="IPR023940">
    <property type="entry name" value="DHDPR_bac"/>
</dbReference>
<dbReference type="InterPro" id="IPR036291">
    <property type="entry name" value="NAD(P)-bd_dom_sf"/>
</dbReference>
<dbReference type="NCBIfam" id="TIGR00036">
    <property type="entry name" value="dapB"/>
    <property type="match status" value="1"/>
</dbReference>
<dbReference type="PANTHER" id="PTHR20836:SF0">
    <property type="entry name" value="4-HYDROXY-TETRAHYDRODIPICOLINATE REDUCTASE 1, CHLOROPLASTIC-RELATED"/>
    <property type="match status" value="1"/>
</dbReference>
<dbReference type="PANTHER" id="PTHR20836">
    <property type="entry name" value="DIHYDRODIPICOLINATE REDUCTASE"/>
    <property type="match status" value="1"/>
</dbReference>
<dbReference type="Pfam" id="PF05173">
    <property type="entry name" value="DapB_C"/>
    <property type="match status" value="1"/>
</dbReference>
<dbReference type="Pfam" id="PF01113">
    <property type="entry name" value="DapB_N"/>
    <property type="match status" value="1"/>
</dbReference>
<dbReference type="PIRSF" id="PIRSF000161">
    <property type="entry name" value="DHPR"/>
    <property type="match status" value="1"/>
</dbReference>
<dbReference type="SUPFAM" id="SSF55347">
    <property type="entry name" value="Glyceraldehyde-3-phosphate dehydrogenase-like, C-terminal domain"/>
    <property type="match status" value="1"/>
</dbReference>
<dbReference type="SUPFAM" id="SSF51735">
    <property type="entry name" value="NAD(P)-binding Rossmann-fold domains"/>
    <property type="match status" value="1"/>
</dbReference>
<dbReference type="PROSITE" id="PS01298">
    <property type="entry name" value="DAPB"/>
    <property type="match status" value="1"/>
</dbReference>
<feature type="chain" id="PRO_1000008603" description="4-hydroxy-tetrahydrodipicolinate reductase">
    <location>
        <begin position="1"/>
        <end position="245"/>
    </location>
</feature>
<feature type="active site" description="Proton donor/acceptor" evidence="1">
    <location>
        <position position="132"/>
    </location>
</feature>
<feature type="active site" description="Proton donor" evidence="1">
    <location>
        <position position="136"/>
    </location>
</feature>
<feature type="binding site" evidence="1">
    <location>
        <begin position="7"/>
        <end position="12"/>
    </location>
    <ligand>
        <name>NAD(+)</name>
        <dbReference type="ChEBI" id="CHEBI:57540"/>
    </ligand>
</feature>
<feature type="binding site" evidence="1">
    <location>
        <begin position="75"/>
        <end position="77"/>
    </location>
    <ligand>
        <name>NAD(+)</name>
        <dbReference type="ChEBI" id="CHEBI:57540"/>
    </ligand>
</feature>
<feature type="binding site" evidence="1">
    <location>
        <begin position="102"/>
        <end position="105"/>
    </location>
    <ligand>
        <name>NAD(+)</name>
        <dbReference type="ChEBI" id="CHEBI:57540"/>
    </ligand>
</feature>
<feature type="binding site" evidence="1">
    <location>
        <position position="133"/>
    </location>
    <ligand>
        <name>(S)-2,3,4,5-tetrahydrodipicolinate</name>
        <dbReference type="ChEBI" id="CHEBI:16845"/>
    </ligand>
</feature>
<feature type="binding site" evidence="1">
    <location>
        <begin position="142"/>
        <end position="143"/>
    </location>
    <ligand>
        <name>(S)-2,3,4,5-tetrahydrodipicolinate</name>
        <dbReference type="ChEBI" id="CHEBI:16845"/>
    </ligand>
</feature>
<name>DAPB_MYCVP</name>
<reference key="1">
    <citation type="submission" date="2006-12" db="EMBL/GenBank/DDBJ databases">
        <title>Complete sequence of Mycobacterium vanbaalenii PYR-1.</title>
        <authorList>
            <consortium name="US DOE Joint Genome Institute"/>
            <person name="Copeland A."/>
            <person name="Lucas S."/>
            <person name="Lapidus A."/>
            <person name="Barry K."/>
            <person name="Detter J.C."/>
            <person name="Glavina del Rio T."/>
            <person name="Hammon N."/>
            <person name="Israni S."/>
            <person name="Dalin E."/>
            <person name="Tice H."/>
            <person name="Pitluck S."/>
            <person name="Singan V."/>
            <person name="Schmutz J."/>
            <person name="Larimer F."/>
            <person name="Land M."/>
            <person name="Hauser L."/>
            <person name="Kyrpides N."/>
            <person name="Anderson I.J."/>
            <person name="Miller C."/>
            <person name="Richardson P."/>
        </authorList>
    </citation>
    <scope>NUCLEOTIDE SEQUENCE [LARGE SCALE GENOMIC DNA]</scope>
    <source>
        <strain>DSM 7251 / JCM 13017 / BCRC 16820 / KCTC 9966 / NRRL B-24157 / PYR-1</strain>
    </source>
</reference>
<organism>
    <name type="scientific">Mycolicibacterium vanbaalenii (strain DSM 7251 / JCM 13017 / BCRC 16820 / KCTC 9966 / NRRL B-24157 / PYR-1)</name>
    <name type="common">Mycobacterium vanbaalenii</name>
    <dbReference type="NCBI Taxonomy" id="350058"/>
    <lineage>
        <taxon>Bacteria</taxon>
        <taxon>Bacillati</taxon>
        <taxon>Actinomycetota</taxon>
        <taxon>Actinomycetes</taxon>
        <taxon>Mycobacteriales</taxon>
        <taxon>Mycobacteriaceae</taxon>
        <taxon>Mycolicibacterium</taxon>
    </lineage>
</organism>
<keyword id="KW-0028">Amino-acid biosynthesis</keyword>
<keyword id="KW-0963">Cytoplasm</keyword>
<keyword id="KW-0220">Diaminopimelate biosynthesis</keyword>
<keyword id="KW-0457">Lysine biosynthesis</keyword>
<keyword id="KW-0520">NAD</keyword>
<keyword id="KW-0521">NADP</keyword>
<keyword id="KW-0560">Oxidoreductase</keyword>
<accession>A1T7N8</accession>
<sequence>MRVGVLGARGKVGATMVAGVEAADDLTFTTGVDAGDSLSALVDSDTEVVIDFTHPSVVMDNLKFLIDNGIHAVVGTTGFTDERLDQVREWLAATPGASVLIAPNFAIGAVLSMHFAQQAAKYFESVEVIELHHPHKADAPSGTAMRTARLIAEARKGMPPNPDATSTGLDGARGADVDGVPVHSVRLAGLVAHQEVLFGTMGETLTIRHDSIDRTSFVPGVLLAVRKIRERPGLTIGIEPLLDLK</sequence>
<gene>
    <name evidence="1" type="primary">dapB</name>
    <name type="ordered locus">Mvan_2374</name>
</gene>
<evidence type="ECO:0000255" key="1">
    <source>
        <dbReference type="HAMAP-Rule" id="MF_00102"/>
    </source>
</evidence>
<evidence type="ECO:0000305" key="2"/>
<proteinExistence type="inferred from homology"/>
<comment type="function">
    <text evidence="1">Catalyzes the conversion of 4-hydroxy-tetrahydrodipicolinate (HTPA) to tetrahydrodipicolinate.</text>
</comment>
<comment type="catalytic activity">
    <reaction evidence="1">
        <text>(S)-2,3,4,5-tetrahydrodipicolinate + NAD(+) + H2O = (2S,4S)-4-hydroxy-2,3,4,5-tetrahydrodipicolinate + NADH + H(+)</text>
        <dbReference type="Rhea" id="RHEA:35323"/>
        <dbReference type="ChEBI" id="CHEBI:15377"/>
        <dbReference type="ChEBI" id="CHEBI:15378"/>
        <dbReference type="ChEBI" id="CHEBI:16845"/>
        <dbReference type="ChEBI" id="CHEBI:57540"/>
        <dbReference type="ChEBI" id="CHEBI:57945"/>
        <dbReference type="ChEBI" id="CHEBI:67139"/>
        <dbReference type="EC" id="1.17.1.8"/>
    </reaction>
</comment>
<comment type="catalytic activity">
    <reaction evidence="1">
        <text>(S)-2,3,4,5-tetrahydrodipicolinate + NADP(+) + H2O = (2S,4S)-4-hydroxy-2,3,4,5-tetrahydrodipicolinate + NADPH + H(+)</text>
        <dbReference type="Rhea" id="RHEA:35331"/>
        <dbReference type="ChEBI" id="CHEBI:15377"/>
        <dbReference type="ChEBI" id="CHEBI:15378"/>
        <dbReference type="ChEBI" id="CHEBI:16845"/>
        <dbReference type="ChEBI" id="CHEBI:57783"/>
        <dbReference type="ChEBI" id="CHEBI:58349"/>
        <dbReference type="ChEBI" id="CHEBI:67139"/>
        <dbReference type="EC" id="1.17.1.8"/>
    </reaction>
</comment>
<comment type="pathway">
    <text evidence="1">Amino-acid biosynthesis; L-lysine biosynthesis via DAP pathway; (S)-tetrahydrodipicolinate from L-aspartate: step 4/4.</text>
</comment>
<comment type="subcellular location">
    <subcellularLocation>
        <location evidence="1">Cytoplasm</location>
    </subcellularLocation>
</comment>
<comment type="similarity">
    <text evidence="1">Belongs to the DapB family.</text>
</comment>
<comment type="caution">
    <text evidence="2">Was originally thought to be a dihydrodipicolinate reductase (DHDPR), catalyzing the conversion of dihydrodipicolinate to tetrahydrodipicolinate. However, it was shown in E.coli that the substrate of the enzymatic reaction is not dihydrodipicolinate (DHDP) but in fact (2S,4S)-4-hydroxy-2,3,4,5-tetrahydrodipicolinic acid (HTPA), the product released by the DapA-catalyzed reaction.</text>
</comment>
<protein>
    <recommendedName>
        <fullName evidence="1">4-hydroxy-tetrahydrodipicolinate reductase</fullName>
        <shortName evidence="1">HTPA reductase</shortName>
        <ecNumber evidence="1">1.17.1.8</ecNumber>
    </recommendedName>
</protein>